<proteinExistence type="inferred from homology"/>
<sequence>MYRLDVVTPTGSVFSGDVYQTVITTADGEIGILENHMLLLTNITPGKLRIEKADGEVKEFAVTYGVLDVRGDKVIALVEEVFELDEINVDNEKQLLEEANQKLQNENLSEEEKEHYEKQRSRSQALLNLASAKV</sequence>
<comment type="function">
    <text evidence="1">Produces ATP from ADP in the presence of a proton gradient across the membrane.</text>
</comment>
<comment type="subunit">
    <text evidence="1">F-type ATPases have 2 components, CF(1) - the catalytic core - and CF(0) - the membrane proton channel. CF(1) has five subunits: alpha(3), beta(3), gamma(1), delta(1), epsilon(1). CF(0) has three main subunits: a, b and c.</text>
</comment>
<comment type="subcellular location">
    <subcellularLocation>
        <location evidence="1">Cell inner membrane</location>
        <topology evidence="1">Peripheral membrane protein</topology>
    </subcellularLocation>
</comment>
<comment type="similarity">
    <text evidence="1">Belongs to the ATPase epsilon chain family.</text>
</comment>
<reference key="1">
    <citation type="journal article" date="2009" name="J. Bacteriol.">
        <title>Complete and draft genome sequences of six members of the Aquificales.</title>
        <authorList>
            <person name="Reysenbach A.-L."/>
            <person name="Hamamura N."/>
            <person name="Podar M."/>
            <person name="Griffiths E."/>
            <person name="Ferreira S."/>
            <person name="Hochstein R."/>
            <person name="Heidelberg J."/>
            <person name="Johnson J."/>
            <person name="Mead D."/>
            <person name="Pohorille A."/>
            <person name="Sarmiento M."/>
            <person name="Schweighofer K."/>
            <person name="Seshadri R."/>
            <person name="Voytek M.A."/>
        </authorList>
    </citation>
    <scope>NUCLEOTIDE SEQUENCE [LARGE SCALE GENOMIC DNA]</scope>
    <source>
        <strain>YO3AOP1</strain>
    </source>
</reference>
<dbReference type="EMBL" id="CP001080">
    <property type="protein sequence ID" value="ACD67161.1"/>
    <property type="molecule type" value="Genomic_DNA"/>
</dbReference>
<dbReference type="RefSeq" id="WP_012460217.1">
    <property type="nucleotide sequence ID" value="NC_010730.1"/>
</dbReference>
<dbReference type="SMR" id="B2V688"/>
<dbReference type="STRING" id="436114.SYO3AOP1_1563"/>
<dbReference type="KEGG" id="sul:SYO3AOP1_1563"/>
<dbReference type="eggNOG" id="COG0355">
    <property type="taxonomic scope" value="Bacteria"/>
</dbReference>
<dbReference type="HOGENOM" id="CLU_084338_1_2_0"/>
<dbReference type="GO" id="GO:0005886">
    <property type="term" value="C:plasma membrane"/>
    <property type="evidence" value="ECO:0007669"/>
    <property type="project" value="UniProtKB-SubCell"/>
</dbReference>
<dbReference type="GO" id="GO:0045259">
    <property type="term" value="C:proton-transporting ATP synthase complex"/>
    <property type="evidence" value="ECO:0007669"/>
    <property type="project" value="UniProtKB-KW"/>
</dbReference>
<dbReference type="GO" id="GO:0005524">
    <property type="term" value="F:ATP binding"/>
    <property type="evidence" value="ECO:0007669"/>
    <property type="project" value="UniProtKB-UniRule"/>
</dbReference>
<dbReference type="GO" id="GO:0046933">
    <property type="term" value="F:proton-transporting ATP synthase activity, rotational mechanism"/>
    <property type="evidence" value="ECO:0007669"/>
    <property type="project" value="UniProtKB-UniRule"/>
</dbReference>
<dbReference type="CDD" id="cd12152">
    <property type="entry name" value="F1-ATPase_delta"/>
    <property type="match status" value="1"/>
</dbReference>
<dbReference type="Gene3D" id="2.60.15.10">
    <property type="entry name" value="F0F1 ATP synthase delta/epsilon subunit, N-terminal"/>
    <property type="match status" value="1"/>
</dbReference>
<dbReference type="HAMAP" id="MF_00530">
    <property type="entry name" value="ATP_synth_epsil_bac"/>
    <property type="match status" value="1"/>
</dbReference>
<dbReference type="InterPro" id="IPR001469">
    <property type="entry name" value="ATP_synth_F1_dsu/esu"/>
</dbReference>
<dbReference type="InterPro" id="IPR020546">
    <property type="entry name" value="ATP_synth_F1_dsu/esu_N"/>
</dbReference>
<dbReference type="InterPro" id="IPR036771">
    <property type="entry name" value="ATPsynth_dsu/esu_N"/>
</dbReference>
<dbReference type="NCBIfam" id="TIGR01216">
    <property type="entry name" value="ATP_synt_epsi"/>
    <property type="match status" value="1"/>
</dbReference>
<dbReference type="PANTHER" id="PTHR13822">
    <property type="entry name" value="ATP SYNTHASE DELTA/EPSILON CHAIN"/>
    <property type="match status" value="1"/>
</dbReference>
<dbReference type="PANTHER" id="PTHR13822:SF10">
    <property type="entry name" value="ATP SYNTHASE EPSILON CHAIN, CHLOROPLASTIC"/>
    <property type="match status" value="1"/>
</dbReference>
<dbReference type="Pfam" id="PF02823">
    <property type="entry name" value="ATP-synt_DE_N"/>
    <property type="match status" value="1"/>
</dbReference>
<dbReference type="SUPFAM" id="SSF51344">
    <property type="entry name" value="Epsilon subunit of F1F0-ATP synthase N-terminal domain"/>
    <property type="match status" value="1"/>
</dbReference>
<name>ATPE_SULSY</name>
<evidence type="ECO:0000255" key="1">
    <source>
        <dbReference type="HAMAP-Rule" id="MF_00530"/>
    </source>
</evidence>
<evidence type="ECO:0000256" key="2">
    <source>
        <dbReference type="SAM" id="MobiDB-lite"/>
    </source>
</evidence>
<accession>B2V688</accession>
<keyword id="KW-0066">ATP synthesis</keyword>
<keyword id="KW-0997">Cell inner membrane</keyword>
<keyword id="KW-1003">Cell membrane</keyword>
<keyword id="KW-0139">CF(1)</keyword>
<keyword id="KW-0375">Hydrogen ion transport</keyword>
<keyword id="KW-0406">Ion transport</keyword>
<keyword id="KW-0472">Membrane</keyword>
<keyword id="KW-0813">Transport</keyword>
<organism>
    <name type="scientific">Sulfurihydrogenibium sp. (strain YO3AOP1)</name>
    <dbReference type="NCBI Taxonomy" id="436114"/>
    <lineage>
        <taxon>Bacteria</taxon>
        <taxon>Pseudomonadati</taxon>
        <taxon>Aquificota</taxon>
        <taxon>Aquificia</taxon>
        <taxon>Aquificales</taxon>
        <taxon>Hydrogenothermaceae</taxon>
        <taxon>Sulfurihydrogenibium</taxon>
    </lineage>
</organism>
<protein>
    <recommendedName>
        <fullName evidence="1">ATP synthase epsilon chain</fullName>
    </recommendedName>
    <alternativeName>
        <fullName evidence="1">ATP synthase F1 sector epsilon subunit</fullName>
    </alternativeName>
    <alternativeName>
        <fullName evidence="1">F-ATPase epsilon subunit</fullName>
    </alternativeName>
</protein>
<feature type="chain" id="PRO_1000127901" description="ATP synthase epsilon chain">
    <location>
        <begin position="1"/>
        <end position="134"/>
    </location>
</feature>
<feature type="region of interest" description="Disordered" evidence="2">
    <location>
        <begin position="100"/>
        <end position="134"/>
    </location>
</feature>
<feature type="compositionally biased region" description="Basic and acidic residues" evidence="2">
    <location>
        <begin position="110"/>
        <end position="120"/>
    </location>
</feature>
<gene>
    <name evidence="1" type="primary">atpC</name>
    <name type="ordered locus">SYO3AOP1_1563</name>
</gene>